<name>RIBB_SALTI</name>
<keyword id="KW-0456">Lyase</keyword>
<keyword id="KW-0460">Magnesium</keyword>
<keyword id="KW-0464">Manganese</keyword>
<keyword id="KW-0479">Metal-binding</keyword>
<keyword id="KW-0686">Riboflavin biosynthesis</keyword>
<protein>
    <recommendedName>
        <fullName evidence="1">3,4-dihydroxy-2-butanone 4-phosphate synthase</fullName>
        <shortName evidence="1">DHBP synthase</shortName>
        <ecNumber evidence="1">4.1.99.12</ecNumber>
    </recommendedName>
</protein>
<proteinExistence type="inferred from homology"/>
<organism>
    <name type="scientific">Salmonella typhi</name>
    <dbReference type="NCBI Taxonomy" id="90370"/>
    <lineage>
        <taxon>Bacteria</taxon>
        <taxon>Pseudomonadati</taxon>
        <taxon>Pseudomonadota</taxon>
        <taxon>Gammaproteobacteria</taxon>
        <taxon>Enterobacterales</taxon>
        <taxon>Enterobacteriaceae</taxon>
        <taxon>Salmonella</taxon>
    </lineage>
</organism>
<gene>
    <name evidence="1" type="primary">ribB</name>
    <name type="ordered locus">STY3373</name>
    <name type="ordered locus">t3115</name>
</gene>
<reference key="1">
    <citation type="journal article" date="2001" name="Nature">
        <title>Complete genome sequence of a multiple drug resistant Salmonella enterica serovar Typhi CT18.</title>
        <authorList>
            <person name="Parkhill J."/>
            <person name="Dougan G."/>
            <person name="James K.D."/>
            <person name="Thomson N.R."/>
            <person name="Pickard D."/>
            <person name="Wain J."/>
            <person name="Churcher C.M."/>
            <person name="Mungall K.L."/>
            <person name="Bentley S.D."/>
            <person name="Holden M.T.G."/>
            <person name="Sebaihia M."/>
            <person name="Baker S."/>
            <person name="Basham D."/>
            <person name="Brooks K."/>
            <person name="Chillingworth T."/>
            <person name="Connerton P."/>
            <person name="Cronin A."/>
            <person name="Davis P."/>
            <person name="Davies R.M."/>
            <person name="Dowd L."/>
            <person name="White N."/>
            <person name="Farrar J."/>
            <person name="Feltwell T."/>
            <person name="Hamlin N."/>
            <person name="Haque A."/>
            <person name="Hien T.T."/>
            <person name="Holroyd S."/>
            <person name="Jagels K."/>
            <person name="Krogh A."/>
            <person name="Larsen T.S."/>
            <person name="Leather S."/>
            <person name="Moule S."/>
            <person name="O'Gaora P."/>
            <person name="Parry C."/>
            <person name="Quail M.A."/>
            <person name="Rutherford K.M."/>
            <person name="Simmonds M."/>
            <person name="Skelton J."/>
            <person name="Stevens K."/>
            <person name="Whitehead S."/>
            <person name="Barrell B.G."/>
        </authorList>
    </citation>
    <scope>NUCLEOTIDE SEQUENCE [LARGE SCALE GENOMIC DNA]</scope>
    <source>
        <strain>CT18</strain>
    </source>
</reference>
<reference key="2">
    <citation type="journal article" date="2003" name="J. Bacteriol.">
        <title>Comparative genomics of Salmonella enterica serovar Typhi strains Ty2 and CT18.</title>
        <authorList>
            <person name="Deng W."/>
            <person name="Liou S.-R."/>
            <person name="Plunkett G. III"/>
            <person name="Mayhew G.F."/>
            <person name="Rose D.J."/>
            <person name="Burland V."/>
            <person name="Kodoyianni V."/>
            <person name="Schwartz D.C."/>
            <person name="Blattner F.R."/>
        </authorList>
    </citation>
    <scope>NUCLEOTIDE SEQUENCE [LARGE SCALE GENOMIC DNA]</scope>
    <source>
        <strain>ATCC 700931 / Ty2</strain>
    </source>
</reference>
<evidence type="ECO:0000255" key="1">
    <source>
        <dbReference type="HAMAP-Rule" id="MF_00180"/>
    </source>
</evidence>
<comment type="function">
    <text evidence="1">Catalyzes the conversion of D-ribulose 5-phosphate to formate and 3,4-dihydroxy-2-butanone 4-phosphate.</text>
</comment>
<comment type="catalytic activity">
    <reaction evidence="1">
        <text>D-ribulose 5-phosphate = (2S)-2-hydroxy-3-oxobutyl phosphate + formate + H(+)</text>
        <dbReference type="Rhea" id="RHEA:18457"/>
        <dbReference type="ChEBI" id="CHEBI:15378"/>
        <dbReference type="ChEBI" id="CHEBI:15740"/>
        <dbReference type="ChEBI" id="CHEBI:58121"/>
        <dbReference type="ChEBI" id="CHEBI:58830"/>
        <dbReference type="EC" id="4.1.99.12"/>
    </reaction>
</comment>
<comment type="cofactor">
    <cofactor evidence="1">
        <name>Mg(2+)</name>
        <dbReference type="ChEBI" id="CHEBI:18420"/>
    </cofactor>
    <cofactor evidence="1">
        <name>Mn(2+)</name>
        <dbReference type="ChEBI" id="CHEBI:29035"/>
    </cofactor>
    <text evidence="1">Binds 2 divalent metal cations per subunit. Magnesium or manganese.</text>
</comment>
<comment type="pathway">
    <text evidence="1">Cofactor biosynthesis; riboflavin biosynthesis; 2-hydroxy-3-oxobutyl phosphate from D-ribulose 5-phosphate: step 1/1.</text>
</comment>
<comment type="subunit">
    <text evidence="1">Homodimer.</text>
</comment>
<comment type="similarity">
    <text evidence="1">Belongs to the DHBP synthase family.</text>
</comment>
<accession>P66033</accession>
<accession>Q8XES0</accession>
<dbReference type="EC" id="4.1.99.12" evidence="1"/>
<dbReference type="EMBL" id="AL513382">
    <property type="protein sequence ID" value="CAD07720.1"/>
    <property type="molecule type" value="Genomic_DNA"/>
</dbReference>
<dbReference type="EMBL" id="AE014613">
    <property type="protein sequence ID" value="AAO70658.1"/>
    <property type="molecule type" value="Genomic_DNA"/>
</dbReference>
<dbReference type="RefSeq" id="NP_457586.1">
    <property type="nucleotide sequence ID" value="NC_003198.1"/>
</dbReference>
<dbReference type="RefSeq" id="WP_001076978.1">
    <property type="nucleotide sequence ID" value="NZ_WSUR01000003.1"/>
</dbReference>
<dbReference type="SMR" id="P66033"/>
<dbReference type="STRING" id="220341.gene:17587229"/>
<dbReference type="KEGG" id="stt:t3115"/>
<dbReference type="KEGG" id="sty:STY3373"/>
<dbReference type="PATRIC" id="fig|220341.7.peg.3434"/>
<dbReference type="eggNOG" id="COG0108">
    <property type="taxonomic scope" value="Bacteria"/>
</dbReference>
<dbReference type="HOGENOM" id="CLU_020273_3_0_6"/>
<dbReference type="OMA" id="DAGGLIC"/>
<dbReference type="OrthoDB" id="9793111at2"/>
<dbReference type="UniPathway" id="UPA00275">
    <property type="reaction ID" value="UER00399"/>
</dbReference>
<dbReference type="Proteomes" id="UP000000541">
    <property type="component" value="Chromosome"/>
</dbReference>
<dbReference type="Proteomes" id="UP000002670">
    <property type="component" value="Chromosome"/>
</dbReference>
<dbReference type="GO" id="GO:0005829">
    <property type="term" value="C:cytosol"/>
    <property type="evidence" value="ECO:0007669"/>
    <property type="project" value="TreeGrafter"/>
</dbReference>
<dbReference type="GO" id="GO:0008686">
    <property type="term" value="F:3,4-dihydroxy-2-butanone-4-phosphate synthase activity"/>
    <property type="evidence" value="ECO:0007669"/>
    <property type="project" value="UniProtKB-UniRule"/>
</dbReference>
<dbReference type="GO" id="GO:0000287">
    <property type="term" value="F:magnesium ion binding"/>
    <property type="evidence" value="ECO:0007669"/>
    <property type="project" value="UniProtKB-UniRule"/>
</dbReference>
<dbReference type="GO" id="GO:0030145">
    <property type="term" value="F:manganese ion binding"/>
    <property type="evidence" value="ECO:0007669"/>
    <property type="project" value="UniProtKB-UniRule"/>
</dbReference>
<dbReference type="GO" id="GO:0009231">
    <property type="term" value="P:riboflavin biosynthetic process"/>
    <property type="evidence" value="ECO:0007669"/>
    <property type="project" value="UniProtKB-UniRule"/>
</dbReference>
<dbReference type="FunFam" id="3.90.870.10:FF:000002">
    <property type="entry name" value="3,4-dihydroxy-2-butanone 4-phosphate synthase"/>
    <property type="match status" value="1"/>
</dbReference>
<dbReference type="Gene3D" id="3.90.870.10">
    <property type="entry name" value="DHBP synthase"/>
    <property type="match status" value="1"/>
</dbReference>
<dbReference type="HAMAP" id="MF_00180">
    <property type="entry name" value="RibB"/>
    <property type="match status" value="1"/>
</dbReference>
<dbReference type="InterPro" id="IPR017945">
    <property type="entry name" value="DHBP_synth_RibB-like_a/b_dom"/>
</dbReference>
<dbReference type="InterPro" id="IPR000422">
    <property type="entry name" value="DHBP_synthase_RibB"/>
</dbReference>
<dbReference type="NCBIfam" id="TIGR00506">
    <property type="entry name" value="ribB"/>
    <property type="match status" value="1"/>
</dbReference>
<dbReference type="PANTHER" id="PTHR21327:SF38">
    <property type="entry name" value="3,4-DIHYDROXY-2-BUTANONE 4-PHOSPHATE SYNTHASE"/>
    <property type="match status" value="1"/>
</dbReference>
<dbReference type="PANTHER" id="PTHR21327">
    <property type="entry name" value="GTP CYCLOHYDROLASE II-RELATED"/>
    <property type="match status" value="1"/>
</dbReference>
<dbReference type="Pfam" id="PF00926">
    <property type="entry name" value="DHBP_synthase"/>
    <property type="match status" value="1"/>
</dbReference>
<dbReference type="SUPFAM" id="SSF55821">
    <property type="entry name" value="YrdC/RibB"/>
    <property type="match status" value="1"/>
</dbReference>
<feature type="chain" id="PRO_0000151809" description="3,4-dihydroxy-2-butanone 4-phosphate synthase">
    <location>
        <begin position="1"/>
        <end position="217"/>
    </location>
</feature>
<feature type="binding site" evidence="1">
    <location>
        <begin position="37"/>
        <end position="38"/>
    </location>
    <ligand>
        <name>D-ribulose 5-phosphate</name>
        <dbReference type="ChEBI" id="CHEBI:58121"/>
    </ligand>
</feature>
<feature type="binding site" evidence="1">
    <location>
        <position position="38"/>
    </location>
    <ligand>
        <name>Mg(2+)</name>
        <dbReference type="ChEBI" id="CHEBI:18420"/>
        <label>1</label>
    </ligand>
</feature>
<feature type="binding site" evidence="1">
    <location>
        <position position="38"/>
    </location>
    <ligand>
        <name>Mg(2+)</name>
        <dbReference type="ChEBI" id="CHEBI:18420"/>
        <label>2</label>
    </ligand>
</feature>
<feature type="binding site" evidence="1">
    <location>
        <position position="42"/>
    </location>
    <ligand>
        <name>D-ribulose 5-phosphate</name>
        <dbReference type="ChEBI" id="CHEBI:58121"/>
    </ligand>
</feature>
<feature type="binding site" evidence="1">
    <location>
        <begin position="150"/>
        <end position="154"/>
    </location>
    <ligand>
        <name>D-ribulose 5-phosphate</name>
        <dbReference type="ChEBI" id="CHEBI:58121"/>
    </ligand>
</feature>
<feature type="binding site" evidence="1">
    <location>
        <position position="153"/>
    </location>
    <ligand>
        <name>Mg(2+)</name>
        <dbReference type="ChEBI" id="CHEBI:18420"/>
        <label>2</label>
    </ligand>
</feature>
<feature type="binding site" evidence="1">
    <location>
        <position position="174"/>
    </location>
    <ligand>
        <name>D-ribulose 5-phosphate</name>
        <dbReference type="ChEBI" id="CHEBI:58121"/>
    </ligand>
</feature>
<feature type="site" description="Essential for catalytic activity" evidence="1">
    <location>
        <position position="136"/>
    </location>
</feature>
<feature type="site" description="Essential for catalytic activity" evidence="1">
    <location>
        <position position="174"/>
    </location>
</feature>
<sequence>MNQTLLSSFGTPFERVELALDALREGRGVMVLDDEDRENEGDMIFPAETMTVEQMALTIRHGSGIVCLCITEDRRKQLDLPMMVENNTSAYGTGFTVTIEAAEGVTTGVSAADRVTTVRAAIKDGAKPSDLNRPGHVFPLRAQAGGVLTRGGHTEATIDLMTLAGFKPAGVLCELTNDDGTMARAPECIAFAGQHNMAVVTIEDLVAYRQAHERKAS</sequence>